<proteinExistence type="inferred from homology"/>
<name>BL1S2_DICDI</name>
<gene>
    <name type="primary">bloc1s2</name>
    <name type="ORF">DDB_G0278387</name>
</gene>
<reference key="1">
    <citation type="journal article" date="2005" name="Nature">
        <title>The genome of the social amoeba Dictyostelium discoideum.</title>
        <authorList>
            <person name="Eichinger L."/>
            <person name="Pachebat J.A."/>
            <person name="Gloeckner G."/>
            <person name="Rajandream M.A."/>
            <person name="Sucgang R."/>
            <person name="Berriman M."/>
            <person name="Song J."/>
            <person name="Olsen R."/>
            <person name="Szafranski K."/>
            <person name="Xu Q."/>
            <person name="Tunggal B."/>
            <person name="Kummerfeld S."/>
            <person name="Madera M."/>
            <person name="Konfortov B.A."/>
            <person name="Rivero F."/>
            <person name="Bankier A.T."/>
            <person name="Lehmann R."/>
            <person name="Hamlin N."/>
            <person name="Davies R."/>
            <person name="Gaudet P."/>
            <person name="Fey P."/>
            <person name="Pilcher K."/>
            <person name="Chen G."/>
            <person name="Saunders D."/>
            <person name="Sodergren E.J."/>
            <person name="Davis P."/>
            <person name="Kerhornou A."/>
            <person name="Nie X."/>
            <person name="Hall N."/>
            <person name="Anjard C."/>
            <person name="Hemphill L."/>
            <person name="Bason N."/>
            <person name="Farbrother P."/>
            <person name="Desany B."/>
            <person name="Just E."/>
            <person name="Morio T."/>
            <person name="Rost R."/>
            <person name="Churcher C.M."/>
            <person name="Cooper J."/>
            <person name="Haydock S."/>
            <person name="van Driessche N."/>
            <person name="Cronin A."/>
            <person name="Goodhead I."/>
            <person name="Muzny D.M."/>
            <person name="Mourier T."/>
            <person name="Pain A."/>
            <person name="Lu M."/>
            <person name="Harper D."/>
            <person name="Lindsay R."/>
            <person name="Hauser H."/>
            <person name="James K.D."/>
            <person name="Quiles M."/>
            <person name="Madan Babu M."/>
            <person name="Saito T."/>
            <person name="Buchrieser C."/>
            <person name="Wardroper A."/>
            <person name="Felder M."/>
            <person name="Thangavelu M."/>
            <person name="Johnson D."/>
            <person name="Knights A."/>
            <person name="Loulseged H."/>
            <person name="Mungall K.L."/>
            <person name="Oliver K."/>
            <person name="Price C."/>
            <person name="Quail M.A."/>
            <person name="Urushihara H."/>
            <person name="Hernandez J."/>
            <person name="Rabbinowitsch E."/>
            <person name="Steffen D."/>
            <person name="Sanders M."/>
            <person name="Ma J."/>
            <person name="Kohara Y."/>
            <person name="Sharp S."/>
            <person name="Simmonds M.N."/>
            <person name="Spiegler S."/>
            <person name="Tivey A."/>
            <person name="Sugano S."/>
            <person name="White B."/>
            <person name="Walker D."/>
            <person name="Woodward J.R."/>
            <person name="Winckler T."/>
            <person name="Tanaka Y."/>
            <person name="Shaulsky G."/>
            <person name="Schleicher M."/>
            <person name="Weinstock G.M."/>
            <person name="Rosenthal A."/>
            <person name="Cox E.C."/>
            <person name="Chisholm R.L."/>
            <person name="Gibbs R.A."/>
            <person name="Loomis W.F."/>
            <person name="Platzer M."/>
            <person name="Kay R.R."/>
            <person name="Williams J.G."/>
            <person name="Dear P.H."/>
            <person name="Noegel A.A."/>
            <person name="Barrell B.G."/>
            <person name="Kuspa A."/>
        </authorList>
    </citation>
    <scope>NUCLEOTIDE SEQUENCE [LARGE SCALE GENOMIC DNA]</scope>
    <source>
        <strain>AX4</strain>
    </source>
</reference>
<keyword id="KW-0175">Coiled coil</keyword>
<keyword id="KW-0963">Cytoplasm</keyword>
<keyword id="KW-0206">Cytoskeleton</keyword>
<keyword id="KW-0458">Lysosome</keyword>
<keyword id="KW-0472">Membrane</keyword>
<keyword id="KW-1185">Reference proteome</keyword>
<accession>Q54Y67</accession>
<organism>
    <name type="scientific">Dictyostelium discoideum</name>
    <name type="common">Social amoeba</name>
    <dbReference type="NCBI Taxonomy" id="44689"/>
    <lineage>
        <taxon>Eukaryota</taxon>
        <taxon>Amoebozoa</taxon>
        <taxon>Evosea</taxon>
        <taxon>Eumycetozoa</taxon>
        <taxon>Dictyostelia</taxon>
        <taxon>Dictyosteliales</taxon>
        <taxon>Dictyosteliaceae</taxon>
        <taxon>Dictyostelium</taxon>
    </lineage>
</organism>
<dbReference type="EMBL" id="AAFI02000023">
    <property type="protein sequence ID" value="EAL68366.1"/>
    <property type="status" value="ALT_SEQ"/>
    <property type="molecule type" value="Genomic_DNA"/>
</dbReference>
<dbReference type="RefSeq" id="XP_642335.1">
    <property type="nucleotide sequence ID" value="XM_637243.1"/>
</dbReference>
<dbReference type="SMR" id="Q54Y67"/>
<dbReference type="STRING" id="44689.Q54Y67"/>
<dbReference type="PaxDb" id="44689-DDB0302513"/>
<dbReference type="EnsemblProtists" id="EAL68366">
    <property type="protein sequence ID" value="EAL68366"/>
    <property type="gene ID" value="DDB_G0278387"/>
</dbReference>
<dbReference type="GeneID" id="8621541"/>
<dbReference type="KEGG" id="ddi:DDB_G0278387"/>
<dbReference type="dictyBase" id="DDB_G0278387">
    <property type="gene designation" value="bloc1s2"/>
</dbReference>
<dbReference type="VEuPathDB" id="AmoebaDB:DDB_G0278387"/>
<dbReference type="eggNOG" id="KOG4559">
    <property type="taxonomic scope" value="Eukaryota"/>
</dbReference>
<dbReference type="InParanoid" id="Q54Y67"/>
<dbReference type="PRO" id="PR:Q54Y67"/>
<dbReference type="Proteomes" id="UP000002195">
    <property type="component" value="Chromosome 3"/>
</dbReference>
<dbReference type="GO" id="GO:0031083">
    <property type="term" value="C:BLOC-1 complex"/>
    <property type="evidence" value="ECO:0000318"/>
    <property type="project" value="GO_Central"/>
</dbReference>
<dbReference type="GO" id="GO:0099078">
    <property type="term" value="C:BORC complex"/>
    <property type="evidence" value="ECO:0000318"/>
    <property type="project" value="GO_Central"/>
</dbReference>
<dbReference type="GO" id="GO:0005813">
    <property type="term" value="C:centrosome"/>
    <property type="evidence" value="ECO:0007669"/>
    <property type="project" value="UniProtKB-SubCell"/>
</dbReference>
<dbReference type="GO" id="GO:0000930">
    <property type="term" value="C:gamma-tubulin complex"/>
    <property type="evidence" value="ECO:0000318"/>
    <property type="project" value="GO_Central"/>
</dbReference>
<dbReference type="GO" id="GO:0005765">
    <property type="term" value="C:lysosomal membrane"/>
    <property type="evidence" value="ECO:0007669"/>
    <property type="project" value="UniProtKB-SubCell"/>
</dbReference>
<dbReference type="GO" id="GO:0043015">
    <property type="term" value="F:gamma-tubulin binding"/>
    <property type="evidence" value="ECO:0000318"/>
    <property type="project" value="GO_Central"/>
</dbReference>
<dbReference type="GO" id="GO:0016197">
    <property type="term" value="P:endosomal transport"/>
    <property type="evidence" value="ECO:0000318"/>
    <property type="project" value="GO_Central"/>
</dbReference>
<dbReference type="GO" id="GO:0032418">
    <property type="term" value="P:lysosome localization"/>
    <property type="evidence" value="ECO:0000318"/>
    <property type="project" value="GO_Central"/>
</dbReference>
<dbReference type="InterPro" id="IPR019269">
    <property type="entry name" value="BLOC1_su2"/>
</dbReference>
<dbReference type="PANTHER" id="PTHR46479">
    <property type="entry name" value="BIOGENESIS OF LYSOSOME-RELATED ORGANELLES COMPLEX 1 SUBUNIT 2"/>
    <property type="match status" value="1"/>
</dbReference>
<dbReference type="PANTHER" id="PTHR46479:SF1">
    <property type="entry name" value="BIOGENESIS OF LYSOSOME-RELATED ORGANELLES COMPLEX 1 SUBUNIT 2"/>
    <property type="match status" value="1"/>
</dbReference>
<dbReference type="Pfam" id="PF10046">
    <property type="entry name" value="BLOC1_2"/>
    <property type="match status" value="1"/>
</dbReference>
<sequence>MSETTPNNTSNNNNNNNNNNNNNNNNNNNNNNNNNNNNNNNNNNHNNNNNTNNNNIDTFSQKASNDIVKPILPVTEDLQNSTKEMFTKVSSYIKSELATTVSDYNLLIQMNNITSSKYQDMTNVTKGLSVFMGDLKIKYEEFQPYFDKINELDKNVTDLEKTVQLLDEYTKRLEQKVKNIDKSSLLPTKQIQPPQPIPQQQPAQPAQPTQPTQPAQQPSQVSTETKPQENIENK</sequence>
<comment type="function">
    <text evidence="1">Component of the BLOC-1 complex, a complex that is required for normal biogenesis of lysosome-related organelles (LRO). May also participate in the coupling of lysosomes to microtubule plus-end-directed kinesin motor. May also play a role in intracellular vesicle trafficking.</text>
</comment>
<comment type="subunit">
    <text evidence="1">Component of the biogenesis of lysosome-related organelles complex 1 (BLOC-1).</text>
</comment>
<comment type="subcellular location">
    <subcellularLocation>
        <location evidence="1">Cytoplasm</location>
        <location evidence="1">Cytoskeleton</location>
        <location evidence="1">Microtubule organizing center</location>
        <location evidence="1">Centrosome</location>
    </subcellularLocation>
    <subcellularLocation>
        <location evidence="1">Lysosome membrane</location>
    </subcellularLocation>
</comment>
<comment type="similarity">
    <text evidence="4">Belongs to the BLOC1S2 family.</text>
</comment>
<comment type="sequence caution" evidence="4">
    <conflict type="erroneous gene model prediction">
        <sequence resource="EMBL-CDS" id="EAL68366"/>
    </conflict>
</comment>
<evidence type="ECO:0000250" key="1">
    <source>
        <dbReference type="UniProtKB" id="Q6QNY1"/>
    </source>
</evidence>
<evidence type="ECO:0000255" key="2"/>
<evidence type="ECO:0000256" key="3">
    <source>
        <dbReference type="SAM" id="MobiDB-lite"/>
    </source>
</evidence>
<evidence type="ECO:0000305" key="4"/>
<protein>
    <recommendedName>
        <fullName>Biogenesis of lysosome-related organelles complex 1 subunit 2</fullName>
        <shortName>BLOC-1 subunit 2</shortName>
    </recommendedName>
</protein>
<feature type="chain" id="PRO_0000342163" description="Biogenesis of lysosome-related organelles complex 1 subunit 2">
    <location>
        <begin position="1"/>
        <end position="234"/>
    </location>
</feature>
<feature type="region of interest" description="Disordered" evidence="3">
    <location>
        <begin position="1"/>
        <end position="58"/>
    </location>
</feature>
<feature type="region of interest" description="Disordered" evidence="3">
    <location>
        <begin position="184"/>
        <end position="234"/>
    </location>
</feature>
<feature type="coiled-coil region" evidence="2">
    <location>
        <begin position="145"/>
        <end position="184"/>
    </location>
</feature>
<feature type="compositionally biased region" description="Low complexity" evidence="3">
    <location>
        <begin position="7"/>
        <end position="55"/>
    </location>
</feature>
<feature type="compositionally biased region" description="Low complexity" evidence="3">
    <location>
        <begin position="200"/>
        <end position="218"/>
    </location>
</feature>